<dbReference type="PDB" id="1ZGR">
    <property type="method" value="X-ray"/>
    <property type="resolution" value="2.50 A"/>
    <property type="chains" value="A/B=1-447"/>
</dbReference>
<dbReference type="PDB" id="1ZGS">
    <property type="method" value="X-ray"/>
    <property type="resolution" value="2.50 A"/>
    <property type="chains" value="A/B=1-447"/>
</dbReference>
<dbReference type="PDBsum" id="1ZGR"/>
<dbReference type="PDBsum" id="1ZGS"/>
<dbReference type="SMR" id="P83304"/>
<dbReference type="UniLectin" id="P83304"/>
<dbReference type="EvolutionaryTrace" id="P83304"/>
<dbReference type="GO" id="GO:0005536">
    <property type="term" value="F:D-glucose binding"/>
    <property type="evidence" value="ECO:0000314"/>
    <property type="project" value="UniProtKB"/>
</dbReference>
<dbReference type="GO" id="GO:0005537">
    <property type="term" value="F:D-mannose binding"/>
    <property type="evidence" value="ECO:0000314"/>
    <property type="project" value="UniProtKB"/>
</dbReference>
<dbReference type="GO" id="GO:0007157">
    <property type="term" value="P:heterophilic cell-cell adhesion via plasma membrane cell adhesion molecules"/>
    <property type="evidence" value="ECO:0000314"/>
    <property type="project" value="UniProtKB"/>
</dbReference>
<dbReference type="CDD" id="cd09612">
    <property type="entry name" value="Jacalin"/>
    <property type="match status" value="3"/>
</dbReference>
<dbReference type="FunFam" id="2.100.10.30:FF:000001">
    <property type="entry name" value="Jacalin-related lectin 33"/>
    <property type="match status" value="3"/>
</dbReference>
<dbReference type="Gene3D" id="2.100.10.30">
    <property type="entry name" value="Jacalin-like lectin domain"/>
    <property type="match status" value="3"/>
</dbReference>
<dbReference type="InterPro" id="IPR001229">
    <property type="entry name" value="Jacalin-like_lectin_dom"/>
</dbReference>
<dbReference type="InterPro" id="IPR033734">
    <property type="entry name" value="Jacalin-like_lectin_dom_plant"/>
</dbReference>
<dbReference type="InterPro" id="IPR036404">
    <property type="entry name" value="Jacalin-like_lectin_dom_sf"/>
</dbReference>
<dbReference type="PANTHER" id="PTHR47293">
    <property type="entry name" value="JACALIN-RELATED LECTIN 3"/>
    <property type="match status" value="1"/>
</dbReference>
<dbReference type="PANTHER" id="PTHR47293:SF79">
    <property type="entry name" value="JACALIN-TYPE LECTIN DOMAIN-CONTAINING PROTEIN"/>
    <property type="match status" value="1"/>
</dbReference>
<dbReference type="Pfam" id="PF01419">
    <property type="entry name" value="Jacalin"/>
    <property type="match status" value="3"/>
</dbReference>
<dbReference type="SMART" id="SM00915">
    <property type="entry name" value="Jacalin"/>
    <property type="match status" value="3"/>
</dbReference>
<dbReference type="SUPFAM" id="SSF51101">
    <property type="entry name" value="Mannose-binding lectins"/>
    <property type="match status" value="3"/>
</dbReference>
<dbReference type="PROSITE" id="PS51752">
    <property type="entry name" value="JACALIN_LECTIN"/>
    <property type="match status" value="3"/>
</dbReference>
<feature type="chain" id="PRO_0000072804" description="Mannose/glucose-specific lectin">
    <location>
        <begin position="1" status="less than"/>
        <end position="447"/>
    </location>
</feature>
<feature type="repeat" description="1" evidence="2">
    <location>
        <begin position="1"/>
        <end position="149"/>
    </location>
</feature>
<feature type="domain" description="Jacalin-type lectin 1" evidence="1">
    <location>
        <begin position="5"/>
        <end position="148"/>
    </location>
</feature>
<feature type="repeat" description="2" evidence="2">
    <location>
        <begin position="150"/>
        <end position="295"/>
    </location>
</feature>
<feature type="domain" description="Jacalin-type lectin 2" evidence="1">
    <location>
        <begin position="153"/>
        <end position="294"/>
    </location>
</feature>
<feature type="repeat" description="3" evidence="2">
    <location>
        <begin position="296"/>
        <end position="447"/>
    </location>
</feature>
<feature type="domain" description="Jacalin-type lectin 3" evidence="1">
    <location>
        <begin position="300"/>
        <end position="443"/>
    </location>
</feature>
<feature type="region of interest" description="3 X approximate tandem repeats">
    <location>
        <begin position="1"/>
        <end position="447"/>
    </location>
</feature>
<feature type="sequence variant" evidence="2">
    <original>I</original>
    <variation>V</variation>
    <location>
        <position position="70"/>
    </location>
</feature>
<feature type="sequence variant" evidence="2">
    <original>K</original>
    <variation>R</variation>
    <location>
        <position position="227"/>
    </location>
</feature>
<feature type="sequence variant" evidence="2">
    <original>D</original>
    <variation>N</variation>
    <location>
        <position position="296"/>
    </location>
</feature>
<feature type="non-terminal residue">
    <location>
        <position position="1"/>
    </location>
</feature>
<feature type="strand" evidence="5">
    <location>
        <begin position="6"/>
        <end position="12"/>
    </location>
</feature>
<feature type="strand" evidence="5">
    <location>
        <begin position="16"/>
        <end position="22"/>
    </location>
</feature>
<feature type="strand" evidence="5">
    <location>
        <begin position="27"/>
        <end position="45"/>
    </location>
</feature>
<feature type="strand" evidence="5">
    <location>
        <begin position="53"/>
        <end position="55"/>
    </location>
</feature>
<feature type="strand" evidence="5">
    <location>
        <begin position="61"/>
        <end position="63"/>
    </location>
</feature>
<feature type="strand" evidence="5">
    <location>
        <begin position="66"/>
        <end position="71"/>
    </location>
</feature>
<feature type="turn" evidence="5">
    <location>
        <begin position="74"/>
        <end position="76"/>
    </location>
</feature>
<feature type="strand" evidence="5">
    <location>
        <begin position="79"/>
        <end position="89"/>
    </location>
</feature>
<feature type="strand" evidence="5">
    <location>
        <begin position="92"/>
        <end position="104"/>
    </location>
</feature>
<feature type="strand" evidence="5">
    <location>
        <begin position="106"/>
        <end position="111"/>
    </location>
</feature>
<feature type="strand" evidence="5">
    <location>
        <begin position="114"/>
        <end position="119"/>
    </location>
</feature>
<feature type="strand" evidence="5">
    <location>
        <begin position="123"/>
        <end position="148"/>
    </location>
</feature>
<feature type="strand" evidence="5">
    <location>
        <begin position="154"/>
        <end position="160"/>
    </location>
</feature>
<feature type="strand" evidence="5">
    <location>
        <begin position="165"/>
        <end position="171"/>
    </location>
</feature>
<feature type="strand" evidence="5">
    <location>
        <begin position="176"/>
        <end position="194"/>
    </location>
</feature>
<feature type="strand" evidence="5">
    <location>
        <begin position="199"/>
        <end position="204"/>
    </location>
</feature>
<feature type="strand" evidence="5">
    <location>
        <begin position="213"/>
        <end position="218"/>
    </location>
</feature>
<feature type="turn" evidence="5">
    <location>
        <begin position="221"/>
        <end position="223"/>
    </location>
</feature>
<feature type="strand" evidence="5">
    <location>
        <begin position="226"/>
        <end position="236"/>
    </location>
</feature>
<feature type="strand" evidence="5">
    <location>
        <begin position="239"/>
        <end position="251"/>
    </location>
</feature>
<feature type="strand" evidence="5">
    <location>
        <begin position="253"/>
        <end position="258"/>
    </location>
</feature>
<feature type="strand" evidence="5">
    <location>
        <begin position="262"/>
        <end position="266"/>
    </location>
</feature>
<feature type="strand" evidence="5">
    <location>
        <begin position="269"/>
        <end position="294"/>
    </location>
</feature>
<feature type="strand" evidence="5">
    <location>
        <begin position="301"/>
        <end position="307"/>
    </location>
</feature>
<feature type="strand" evidence="5">
    <location>
        <begin position="311"/>
        <end position="317"/>
    </location>
</feature>
<feature type="strand" evidence="5">
    <location>
        <begin position="322"/>
        <end position="340"/>
    </location>
</feature>
<feature type="strand" evidence="5">
    <location>
        <begin position="359"/>
        <end position="364"/>
    </location>
</feature>
<feature type="turn" evidence="5">
    <location>
        <begin position="367"/>
        <end position="369"/>
    </location>
</feature>
<feature type="strand" evidence="5">
    <location>
        <begin position="372"/>
        <end position="400"/>
    </location>
</feature>
<feature type="strand" evidence="5">
    <location>
        <begin position="402"/>
        <end position="407"/>
    </location>
</feature>
<feature type="strand" evidence="5">
    <location>
        <begin position="411"/>
        <end position="415"/>
    </location>
</feature>
<feature type="strand" evidence="5">
    <location>
        <begin position="418"/>
        <end position="443"/>
    </location>
</feature>
<keyword id="KW-0002">3D-structure</keyword>
<keyword id="KW-0903">Direct protein sequencing</keyword>
<keyword id="KW-0430">Lectin</keyword>
<keyword id="KW-0465">Mannose-binding</keyword>
<keyword id="KW-0677">Repeat</keyword>
<proteinExistence type="evidence at protein level"/>
<comment type="function">
    <text evidence="3">Mannose/glucose specific lectin. Shows agglutinating activity against rabbit erythrocytes.</text>
</comment>
<comment type="subunit">
    <text evidence="2">Homodimer.</text>
</comment>
<comment type="PTM">
    <text>The N-terminus is blocked.</text>
</comment>
<comment type="mass spectrometry" mass="47946.0" error="6.0" method="Electrospray" evidence="2"/>
<comment type="mass spectrometry" mass="47951.0" error="9.0" method="MALDI" evidence="2"/>
<comment type="miscellaneous">
    <text>PubMed:11502201 authors report the absence of the blocked N-terminal residue, together with 3 to 5 amino acids from the N-terminal part of the protein.</text>
</comment>
<comment type="similarity">
    <text evidence="1 4">Belongs to the jacalin lectin family.</text>
</comment>
<sequence length="447" mass="47521">SLKGMISVGPWGGSGGNYWSFKANHAITEIVIHVKDNIKSISFKDASGDISGTFGGKDPRENEKGDEKKIKIHWPTEYLKSISGSYGDYNGVLVIRSLSFITNLTTYGPFGSTSGGESFSIPIADSVVVGFHGRAGYYLDALGIFVQPVPHGTISFGPWGGPAGDDAFNFKVGSWIKDIIIYADAAINSIAFKDANGHCYGKFGGQDPNDIGVEKKVEIDGNLEHLKSISGTYGNYKGFEVVTSLSFITNVTKHGPFGIASGTSFSIPIEGSLVTGFHGKSGYYLDSIGIYVKPRDVEGSISIGPWGGSGGDPWSYTANEGINQIIIYAGSNIKSVAFKDTSGLDSATFGGVNPKDTGEKNTVSINWPSEYLTSISGTYGQYKFKDVFTTITSLSFTTNLATYGPFGKASATSFSIPIHNNMVVGFHGRAGDYLDAIGIFVKPDTAV</sequence>
<organism evidence="4">
    <name type="scientific">Parkia platycephala</name>
    <dbReference type="NCBI Taxonomy" id="185447"/>
    <lineage>
        <taxon>Eukaryota</taxon>
        <taxon>Viridiplantae</taxon>
        <taxon>Streptophyta</taxon>
        <taxon>Embryophyta</taxon>
        <taxon>Tracheophyta</taxon>
        <taxon>Spermatophyta</taxon>
        <taxon>Magnoliopsida</taxon>
        <taxon>eudicotyledons</taxon>
        <taxon>Gunneridae</taxon>
        <taxon>Pentapetalae</taxon>
        <taxon>rosids</taxon>
        <taxon>fabids</taxon>
        <taxon>Fabales</taxon>
        <taxon>Fabaceae</taxon>
        <taxon>Caesalpinioideae</taxon>
        <taxon>mimosoid clade</taxon>
        <taxon>Mimoseae</taxon>
        <taxon>Parkia</taxon>
    </lineage>
</organism>
<reference evidence="4" key="1">
    <citation type="journal article" date="2001" name="Eur. J. Biochem.">
        <title>The amino-acid sequence of the glucose/mannose-specific lectin isolated from Parkia platycephala seeds reveals three tandemly arranged jacalin-related domains.</title>
        <authorList>
            <person name="Mann K."/>
            <person name="Farias C.M.S.A."/>
            <person name="Del Sol F.G."/>
            <person name="Santos C.F."/>
            <person name="Grangeiro T.B."/>
            <person name="Nagano C.S."/>
            <person name="Cavada B.S."/>
            <person name="Calvete J.J."/>
        </authorList>
    </citation>
    <scope>PROTEIN SEQUENCE</scope>
    <scope>SUBUNIT</scope>
    <scope>MASS SPECTROMETRY</scope>
    <scope>VARIANTS VAL-70; ARG-227 AND ASN-296</scope>
    <source>
        <tissue>Seed</tissue>
    </source>
</reference>
<reference evidence="4" key="2">
    <citation type="journal article" date="1999" name="Protein Pept. Lett.">
        <title>Interaction of the seed lectin from Parkia platycephala (Mimosoideae) with carbohydrates and complex glycans.</title>
        <authorList>
            <person name="Ramos M.V."/>
            <person name="Cavada B.S."/>
            <person name="Bomfim L.R."/>
            <person name="Debray H."/>
            <person name="Mazard A.-M."/>
            <person name="Calvete J.J."/>
            <person name="Grangeiro T.B."/>
            <person name="Rouge P."/>
        </authorList>
    </citation>
    <scope>FUNCTION</scope>
</reference>
<evidence type="ECO:0000255" key="1">
    <source>
        <dbReference type="PROSITE-ProRule" id="PRU01088"/>
    </source>
</evidence>
<evidence type="ECO:0000269" key="2">
    <source>
    </source>
</evidence>
<evidence type="ECO:0000269" key="3">
    <source ref="2"/>
</evidence>
<evidence type="ECO:0000305" key="4"/>
<evidence type="ECO:0007829" key="5">
    <source>
        <dbReference type="PDB" id="1ZGR"/>
    </source>
</evidence>
<name>LEC_PARPC</name>
<protein>
    <recommendedName>
        <fullName>Mannose/glucose-specific lectin</fullName>
    </recommendedName>
</protein>
<accession>P83304</accession>